<evidence type="ECO:0000250" key="1"/>
<evidence type="ECO:0000255" key="2">
    <source>
        <dbReference type="PROSITE-ProRule" id="PRU00159"/>
    </source>
</evidence>
<evidence type="ECO:0000255" key="3">
    <source>
        <dbReference type="PROSITE-ProRule" id="PRU10027"/>
    </source>
</evidence>
<evidence type="ECO:0000256" key="4">
    <source>
        <dbReference type="SAM" id="MobiDB-lite"/>
    </source>
</evidence>
<evidence type="ECO:0000305" key="5"/>
<keyword id="KW-0067">ATP-binding</keyword>
<keyword id="KW-0963">Cytoplasm</keyword>
<keyword id="KW-0418">Kinase</keyword>
<keyword id="KW-0547">Nucleotide-binding</keyword>
<keyword id="KW-1185">Reference proteome</keyword>
<keyword id="KW-0723">Serine/threonine-protein kinase</keyword>
<keyword id="KW-0808">Transferase</keyword>
<keyword id="KW-0879">Wnt signaling pathway</keyword>
<gene>
    <name type="primary">CSNK1B</name>
</gene>
<proteinExistence type="evidence at transcript level"/>
<sequence length="336" mass="38754">MASSSRPKTDVLVGGRYKLVREIGFGSFGHVYLAIDLTNHEQVAVKLESENTRQPRLLHEKELYNFLQGGVGIPQIRWYGQETDYNVLVMDLLGPSLEDLFNFCSRRFSMKTVLMLADQMISRIEYVHSRNLIHRDIKPDNFLMGTGPQWKKLFLVDFGLAKKYRDNRTGQHIPHRSGKSFIGTPFCASISAHLGIEQSRRDDMESIGYVLMYFNRGSLPWQGLKAATLKQKCEKISEMKMTTPVDVLCKGFPIEFAMYLKYCLRLSFEEAPDYRYLRQLFRLLFRKLSYQHDYAFDWIVLKQKAEQQASSSSGEGQQAQTPTGKSDNTKSEMKHS</sequence>
<accession>P35507</accession>
<accession>A3KMY0</accession>
<dbReference type="EC" id="2.7.11.1"/>
<dbReference type="EMBL" id="M76544">
    <property type="protein sequence ID" value="AAA30452.1"/>
    <property type="molecule type" value="mRNA"/>
</dbReference>
<dbReference type="EMBL" id="BC133392">
    <property type="protein sequence ID" value="AAI33393.1"/>
    <property type="molecule type" value="mRNA"/>
</dbReference>
<dbReference type="PIR" id="B56406">
    <property type="entry name" value="B56406"/>
</dbReference>
<dbReference type="RefSeq" id="NP_001091628.1">
    <property type="nucleotide sequence ID" value="NM_001098159.1"/>
</dbReference>
<dbReference type="RefSeq" id="XP_010820216.1">
    <property type="nucleotide sequence ID" value="XM_010821914.4"/>
</dbReference>
<dbReference type="RefSeq" id="XP_010820218.2">
    <property type="nucleotide sequence ID" value="XM_010821916.4"/>
</dbReference>
<dbReference type="RefSeq" id="XP_024844095.1">
    <property type="nucleotide sequence ID" value="XM_024988327.2"/>
</dbReference>
<dbReference type="RefSeq" id="XP_059739560.1">
    <property type="nucleotide sequence ID" value="XM_059883577.1"/>
</dbReference>
<dbReference type="RefSeq" id="XP_059739561.1">
    <property type="nucleotide sequence ID" value="XM_059883578.1"/>
</dbReference>
<dbReference type="SMR" id="P35507"/>
<dbReference type="FunCoup" id="P35507">
    <property type="interactions" value="154"/>
</dbReference>
<dbReference type="STRING" id="9913.ENSBTAP00000030051"/>
<dbReference type="PaxDb" id="9913-ENSBTAP00000030051"/>
<dbReference type="Ensembl" id="ENSBTAT00000030064.5">
    <property type="protein sequence ID" value="ENSBTAP00000030051.3"/>
    <property type="gene ID" value="ENSBTAG00000039794.3"/>
</dbReference>
<dbReference type="Ensembl" id="ENSBTAT00000052805.4">
    <property type="protein sequence ID" value="ENSBTAP00000070459.2"/>
    <property type="gene ID" value="ENSBTAG00000039794.3"/>
</dbReference>
<dbReference type="Ensembl" id="ENSBTAT00000087787.1">
    <property type="protein sequence ID" value="ENSBTAP00000082997.1"/>
    <property type="gene ID" value="ENSBTAG00000039794.3"/>
</dbReference>
<dbReference type="Ensembl" id="ENSBTAT00000094067.1">
    <property type="protein sequence ID" value="ENSBTAP00000096053.1"/>
    <property type="gene ID" value="ENSBTAG00000039794.3"/>
</dbReference>
<dbReference type="Ensembl" id="ENSBTAT00000101700.1">
    <property type="protein sequence ID" value="ENSBTAP00000088735.1"/>
    <property type="gene ID" value="ENSBTAG00000039794.3"/>
</dbReference>
<dbReference type="Ensembl" id="ENSBTAT00000102944.1">
    <property type="protein sequence ID" value="ENSBTAP00000103495.1"/>
    <property type="gene ID" value="ENSBTAG00000039794.3"/>
</dbReference>
<dbReference type="Ensembl" id="ENSBTAT00000104685.1">
    <property type="protein sequence ID" value="ENSBTAP00000102738.1"/>
    <property type="gene ID" value="ENSBTAG00000039794.3"/>
</dbReference>
<dbReference type="Ensembl" id="ENSBTAT00000108155.1">
    <property type="protein sequence ID" value="ENSBTAP00000078136.1"/>
    <property type="gene ID" value="ENSBTAG00000039794.3"/>
</dbReference>
<dbReference type="Ensembl" id="ENSBTAT00000130650.1">
    <property type="protein sequence ID" value="ENSBTAP00000090774.1"/>
    <property type="gene ID" value="ENSBTAG00000039794.3"/>
</dbReference>
<dbReference type="GeneID" id="785423"/>
<dbReference type="KEGG" id="bta:785423"/>
<dbReference type="CTD" id="785423"/>
<dbReference type="VEuPathDB" id="HostDB:ENSBTAG00000039794"/>
<dbReference type="eggNOG" id="KOG1163">
    <property type="taxonomic scope" value="Eukaryota"/>
</dbReference>
<dbReference type="GeneTree" id="ENSGT00940000153700"/>
<dbReference type="HOGENOM" id="CLU_019279_2_0_1"/>
<dbReference type="InParanoid" id="P35507"/>
<dbReference type="OMA" id="TPFCASI"/>
<dbReference type="OrthoDB" id="5800476at2759"/>
<dbReference type="TreeFam" id="TF354246"/>
<dbReference type="BRENDA" id="2.7.11.1">
    <property type="organism ID" value="908"/>
</dbReference>
<dbReference type="Proteomes" id="UP000009136">
    <property type="component" value="Chromosome X"/>
</dbReference>
<dbReference type="Bgee" id="ENSBTAG00000039794">
    <property type="expression patterns" value="Expressed in uterine horn and 101 other cell types or tissues"/>
</dbReference>
<dbReference type="GO" id="GO:0005737">
    <property type="term" value="C:cytoplasm"/>
    <property type="evidence" value="ECO:0000318"/>
    <property type="project" value="GO_Central"/>
</dbReference>
<dbReference type="GO" id="GO:0000139">
    <property type="term" value="C:Golgi membrane"/>
    <property type="evidence" value="ECO:0000314"/>
    <property type="project" value="AgBase"/>
</dbReference>
<dbReference type="GO" id="GO:0005634">
    <property type="term" value="C:nucleus"/>
    <property type="evidence" value="ECO:0000318"/>
    <property type="project" value="GO_Central"/>
</dbReference>
<dbReference type="GO" id="GO:0005524">
    <property type="term" value="F:ATP binding"/>
    <property type="evidence" value="ECO:0007669"/>
    <property type="project" value="UniProtKB-KW"/>
</dbReference>
<dbReference type="GO" id="GO:0106310">
    <property type="term" value="F:protein serine kinase activity"/>
    <property type="evidence" value="ECO:0007669"/>
    <property type="project" value="RHEA"/>
</dbReference>
<dbReference type="GO" id="GO:0004674">
    <property type="term" value="F:protein serine/threonine kinase activity"/>
    <property type="evidence" value="ECO:0000314"/>
    <property type="project" value="AgBase"/>
</dbReference>
<dbReference type="GO" id="GO:0090090">
    <property type="term" value="P:negative regulation of canonical Wnt signaling pathway"/>
    <property type="evidence" value="ECO:0000318"/>
    <property type="project" value="GO_Central"/>
</dbReference>
<dbReference type="GO" id="GO:0018105">
    <property type="term" value="P:peptidyl-serine phosphorylation"/>
    <property type="evidence" value="ECO:0000314"/>
    <property type="project" value="AgBase"/>
</dbReference>
<dbReference type="GO" id="GO:0007165">
    <property type="term" value="P:signal transduction"/>
    <property type="evidence" value="ECO:0000318"/>
    <property type="project" value="GO_Central"/>
</dbReference>
<dbReference type="GO" id="GO:0016055">
    <property type="term" value="P:Wnt signaling pathway"/>
    <property type="evidence" value="ECO:0007669"/>
    <property type="project" value="UniProtKB-KW"/>
</dbReference>
<dbReference type="CDD" id="cd14016">
    <property type="entry name" value="STKc_CK1"/>
    <property type="match status" value="1"/>
</dbReference>
<dbReference type="FunFam" id="1.10.510.10:FF:000718">
    <property type="entry name" value="casein kinase I"/>
    <property type="match status" value="1"/>
</dbReference>
<dbReference type="Gene3D" id="1.10.510.10">
    <property type="entry name" value="Transferase(Phosphotransferase) domain 1"/>
    <property type="match status" value="1"/>
</dbReference>
<dbReference type="InterPro" id="IPR050235">
    <property type="entry name" value="CK1_Ser-Thr_kinase"/>
</dbReference>
<dbReference type="InterPro" id="IPR011009">
    <property type="entry name" value="Kinase-like_dom_sf"/>
</dbReference>
<dbReference type="InterPro" id="IPR000719">
    <property type="entry name" value="Prot_kinase_dom"/>
</dbReference>
<dbReference type="InterPro" id="IPR017441">
    <property type="entry name" value="Protein_kinase_ATP_BS"/>
</dbReference>
<dbReference type="InterPro" id="IPR008271">
    <property type="entry name" value="Ser/Thr_kinase_AS"/>
</dbReference>
<dbReference type="PANTHER" id="PTHR11909">
    <property type="entry name" value="CASEIN KINASE-RELATED"/>
    <property type="match status" value="1"/>
</dbReference>
<dbReference type="Pfam" id="PF00069">
    <property type="entry name" value="Pkinase"/>
    <property type="match status" value="1"/>
</dbReference>
<dbReference type="SMART" id="SM00220">
    <property type="entry name" value="S_TKc"/>
    <property type="match status" value="1"/>
</dbReference>
<dbReference type="SUPFAM" id="SSF56112">
    <property type="entry name" value="Protein kinase-like (PK-like)"/>
    <property type="match status" value="1"/>
</dbReference>
<dbReference type="PROSITE" id="PS00107">
    <property type="entry name" value="PROTEIN_KINASE_ATP"/>
    <property type="match status" value="1"/>
</dbReference>
<dbReference type="PROSITE" id="PS50011">
    <property type="entry name" value="PROTEIN_KINASE_DOM"/>
    <property type="match status" value="1"/>
</dbReference>
<dbReference type="PROSITE" id="PS00108">
    <property type="entry name" value="PROTEIN_KINASE_ST"/>
    <property type="match status" value="1"/>
</dbReference>
<reference key="1">
    <citation type="journal article" date="1991" name="Proc. Natl. Acad. Sci. U.S.A.">
        <title>Purification of casein kinase I and isolation of cDNAs encoding multiple casein kinase I-like enzymes.</title>
        <authorList>
            <person name="Rowles J."/>
            <person name="Slaughter C."/>
            <person name="Moomaw C."/>
            <person name="Hsu J."/>
            <person name="Cobb M.H."/>
        </authorList>
    </citation>
    <scope>NUCLEOTIDE SEQUENCE [MRNA]</scope>
    <source>
        <tissue>Brain</tissue>
    </source>
</reference>
<reference key="2">
    <citation type="submission" date="2007-02" db="EMBL/GenBank/DDBJ databases">
        <authorList>
            <consortium name="NIH - Mammalian Gene Collection (MGC) project"/>
        </authorList>
    </citation>
    <scope>NUCLEOTIDE SEQUENCE [LARGE SCALE MRNA]</scope>
    <source>
        <strain>Hereford</strain>
        <tissue>Fetal skin</tissue>
    </source>
</reference>
<organism>
    <name type="scientific">Bos taurus</name>
    <name type="common">Bovine</name>
    <dbReference type="NCBI Taxonomy" id="9913"/>
    <lineage>
        <taxon>Eukaryota</taxon>
        <taxon>Metazoa</taxon>
        <taxon>Chordata</taxon>
        <taxon>Craniata</taxon>
        <taxon>Vertebrata</taxon>
        <taxon>Euteleostomi</taxon>
        <taxon>Mammalia</taxon>
        <taxon>Eutheria</taxon>
        <taxon>Laurasiatheria</taxon>
        <taxon>Artiodactyla</taxon>
        <taxon>Ruminantia</taxon>
        <taxon>Pecora</taxon>
        <taxon>Bovidae</taxon>
        <taxon>Bovinae</taxon>
        <taxon>Bos</taxon>
    </lineage>
</organism>
<name>KC1B_BOVIN</name>
<protein>
    <recommendedName>
        <fullName>Casein kinase I isoform beta</fullName>
        <shortName>CKI-beta</shortName>
        <ecNumber>2.7.11.1</ecNumber>
    </recommendedName>
</protein>
<comment type="function">
    <text evidence="1">Casein kinases are operationally defined by their preferential utilization of acidic proteins such as caseins as substrates. It can phosphorylate a large number of proteins. Participates in Wnt signaling (By similarity).</text>
</comment>
<comment type="catalytic activity">
    <reaction>
        <text>L-seryl-[protein] + ATP = O-phospho-L-seryl-[protein] + ADP + H(+)</text>
        <dbReference type="Rhea" id="RHEA:17989"/>
        <dbReference type="Rhea" id="RHEA-COMP:9863"/>
        <dbReference type="Rhea" id="RHEA-COMP:11604"/>
        <dbReference type="ChEBI" id="CHEBI:15378"/>
        <dbReference type="ChEBI" id="CHEBI:29999"/>
        <dbReference type="ChEBI" id="CHEBI:30616"/>
        <dbReference type="ChEBI" id="CHEBI:83421"/>
        <dbReference type="ChEBI" id="CHEBI:456216"/>
        <dbReference type="EC" id="2.7.11.1"/>
    </reaction>
</comment>
<comment type="catalytic activity">
    <reaction>
        <text>L-threonyl-[protein] + ATP = O-phospho-L-threonyl-[protein] + ADP + H(+)</text>
        <dbReference type="Rhea" id="RHEA:46608"/>
        <dbReference type="Rhea" id="RHEA-COMP:11060"/>
        <dbReference type="Rhea" id="RHEA-COMP:11605"/>
        <dbReference type="ChEBI" id="CHEBI:15378"/>
        <dbReference type="ChEBI" id="CHEBI:30013"/>
        <dbReference type="ChEBI" id="CHEBI:30616"/>
        <dbReference type="ChEBI" id="CHEBI:61977"/>
        <dbReference type="ChEBI" id="CHEBI:456216"/>
        <dbReference type="EC" id="2.7.11.1"/>
    </reaction>
</comment>
<comment type="subunit">
    <text>Monomer.</text>
</comment>
<comment type="subcellular location">
    <subcellularLocation>
        <location>Cytoplasm</location>
    </subcellularLocation>
</comment>
<comment type="similarity">
    <text evidence="5">Belongs to the protein kinase superfamily. CK1 Ser/Thr protein kinase family. Casein kinase I subfamily.</text>
</comment>
<feature type="chain" id="PRO_0000192831" description="Casein kinase I isoform beta">
    <location>
        <begin position="1"/>
        <end position="336"/>
    </location>
</feature>
<feature type="domain" description="Protein kinase" evidence="2">
    <location>
        <begin position="17"/>
        <end position="285"/>
    </location>
</feature>
<feature type="region of interest" description="Disordered" evidence="4">
    <location>
        <begin position="309"/>
        <end position="336"/>
    </location>
</feature>
<feature type="compositionally biased region" description="Low complexity" evidence="4">
    <location>
        <begin position="309"/>
        <end position="320"/>
    </location>
</feature>
<feature type="compositionally biased region" description="Basic and acidic residues" evidence="4">
    <location>
        <begin position="327"/>
        <end position="336"/>
    </location>
</feature>
<feature type="active site" description="Proton acceptor" evidence="2 3">
    <location>
        <position position="136"/>
    </location>
</feature>
<feature type="binding site" evidence="2">
    <location>
        <begin position="23"/>
        <end position="31"/>
    </location>
    <ligand>
        <name>ATP</name>
        <dbReference type="ChEBI" id="CHEBI:30616"/>
    </ligand>
</feature>
<feature type="binding site" evidence="2">
    <location>
        <position position="46"/>
    </location>
    <ligand>
        <name>ATP</name>
        <dbReference type="ChEBI" id="CHEBI:30616"/>
    </ligand>
</feature>